<geneLocation type="chloroplast"/>
<name>PSBM_PLAOC</name>
<keyword id="KW-0150">Chloroplast</keyword>
<keyword id="KW-0472">Membrane</keyword>
<keyword id="KW-0602">Photosynthesis</keyword>
<keyword id="KW-0604">Photosystem II</keyword>
<keyword id="KW-0934">Plastid</keyword>
<keyword id="KW-0674">Reaction center</keyword>
<keyword id="KW-0793">Thylakoid</keyword>
<keyword id="KW-0812">Transmembrane</keyword>
<keyword id="KW-1133">Transmembrane helix</keyword>
<sequence>MEVNILAFIATALFILVPTAFLLIIYVKTVSQND</sequence>
<gene>
    <name evidence="1" type="primary">psbM</name>
</gene>
<comment type="function">
    <text evidence="1">One of the components of the core complex of photosystem II (PSII). PSII is a light-driven water:plastoquinone oxidoreductase that uses light energy to abstract electrons from H(2)O, generating O(2) and a proton gradient subsequently used for ATP formation. It consists of a core antenna complex that captures photons, and an electron transfer chain that converts photonic excitation into a charge separation. This subunit is found at the monomer-monomer interface.</text>
</comment>
<comment type="subunit">
    <text evidence="1">PSII is composed of 1 copy each of membrane proteins PsbA, PsbB, PsbC, PsbD, PsbE, PsbF, PsbH, PsbI, PsbJ, PsbK, PsbL, PsbM, PsbT, PsbX, PsbY, PsbZ, Psb30/Ycf12, at least 3 peripheral proteins of the oxygen-evolving complex and a large number of cofactors. It forms dimeric complexes.</text>
</comment>
<comment type="subcellular location">
    <subcellularLocation>
        <location evidence="1">Plastid</location>
        <location evidence="1">Chloroplast thylakoid membrane</location>
        <topology evidence="1">Single-pass membrane protein</topology>
    </subcellularLocation>
</comment>
<comment type="similarity">
    <text evidence="1">Belongs to the PsbM family.</text>
</comment>
<protein>
    <recommendedName>
        <fullName evidence="1">Photosystem II reaction center protein M</fullName>
        <shortName evidence="1">PSII-M</shortName>
    </recommendedName>
</protein>
<proteinExistence type="inferred from homology"/>
<evidence type="ECO:0000255" key="1">
    <source>
        <dbReference type="HAMAP-Rule" id="MF_00438"/>
    </source>
</evidence>
<dbReference type="EMBL" id="DQ923116">
    <property type="protein sequence ID" value="ABI49772.1"/>
    <property type="molecule type" value="Genomic_DNA"/>
</dbReference>
<dbReference type="RefSeq" id="YP_740559.1">
    <property type="nucleotide sequence ID" value="NC_008335.1"/>
</dbReference>
<dbReference type="SMR" id="Q09G52"/>
<dbReference type="GeneID" id="4271292"/>
<dbReference type="GO" id="GO:0009535">
    <property type="term" value="C:chloroplast thylakoid membrane"/>
    <property type="evidence" value="ECO:0007669"/>
    <property type="project" value="UniProtKB-SubCell"/>
</dbReference>
<dbReference type="GO" id="GO:0009523">
    <property type="term" value="C:photosystem II"/>
    <property type="evidence" value="ECO:0007669"/>
    <property type="project" value="UniProtKB-KW"/>
</dbReference>
<dbReference type="GO" id="GO:0019684">
    <property type="term" value="P:photosynthesis, light reaction"/>
    <property type="evidence" value="ECO:0007669"/>
    <property type="project" value="InterPro"/>
</dbReference>
<dbReference type="HAMAP" id="MF_00438">
    <property type="entry name" value="PSII_PsbM"/>
    <property type="match status" value="1"/>
</dbReference>
<dbReference type="InterPro" id="IPR007826">
    <property type="entry name" value="PSII_PsbM"/>
</dbReference>
<dbReference type="InterPro" id="IPR037269">
    <property type="entry name" value="PSII_PsbM_sf"/>
</dbReference>
<dbReference type="NCBIfam" id="TIGR03038">
    <property type="entry name" value="PS_II_psbM"/>
    <property type="match status" value="1"/>
</dbReference>
<dbReference type="PANTHER" id="PTHR35774">
    <property type="entry name" value="PHOTOSYSTEM II REACTION CENTER PROTEIN M"/>
    <property type="match status" value="1"/>
</dbReference>
<dbReference type="PANTHER" id="PTHR35774:SF1">
    <property type="entry name" value="PHOTOSYSTEM II REACTION CENTER PROTEIN M"/>
    <property type="match status" value="1"/>
</dbReference>
<dbReference type="Pfam" id="PF05151">
    <property type="entry name" value="PsbM"/>
    <property type="match status" value="1"/>
</dbReference>
<dbReference type="SUPFAM" id="SSF161033">
    <property type="entry name" value="Photosystem II reaction center protein M, PsbM"/>
    <property type="match status" value="1"/>
</dbReference>
<reference key="1">
    <citation type="journal article" date="2006" name="BMC Plant Biol.">
        <title>Rapid and accurate pyrosequencing of angiosperm plastid genomes.</title>
        <authorList>
            <person name="Moore M.J."/>
            <person name="Dhingra A."/>
            <person name="Soltis P.S."/>
            <person name="Shaw R."/>
            <person name="Farmerie W.G."/>
            <person name="Folta K.M."/>
            <person name="Soltis D.E."/>
        </authorList>
    </citation>
    <scope>NUCLEOTIDE SEQUENCE [LARGE SCALE GENOMIC DNA]</scope>
</reference>
<accession>Q09G52</accession>
<organism>
    <name type="scientific">Platanus occidentalis</name>
    <name type="common">Sycamore</name>
    <name type="synonym">American plane tree</name>
    <dbReference type="NCBI Taxonomy" id="4403"/>
    <lineage>
        <taxon>Eukaryota</taxon>
        <taxon>Viridiplantae</taxon>
        <taxon>Streptophyta</taxon>
        <taxon>Embryophyta</taxon>
        <taxon>Tracheophyta</taxon>
        <taxon>Spermatophyta</taxon>
        <taxon>Magnoliopsida</taxon>
        <taxon>Proteales</taxon>
        <taxon>Platanaceae</taxon>
        <taxon>Platanus</taxon>
    </lineage>
</organism>
<feature type="chain" id="PRO_0000325747" description="Photosystem II reaction center protein M">
    <location>
        <begin position="1"/>
        <end position="34"/>
    </location>
</feature>
<feature type="transmembrane region" description="Helical" evidence="1">
    <location>
        <begin position="5"/>
        <end position="25"/>
    </location>
</feature>